<proteinExistence type="evidence at protein level"/>
<evidence type="ECO:0000250" key="1"/>
<evidence type="ECO:0000250" key="2">
    <source>
        <dbReference type="UniProtKB" id="P17635"/>
    </source>
</evidence>
<evidence type="ECO:0000250" key="3">
    <source>
        <dbReference type="UniProtKB" id="Q99518"/>
    </source>
</evidence>
<evidence type="ECO:0000250" key="4">
    <source>
        <dbReference type="UniProtKB" id="Q9HFE4"/>
    </source>
</evidence>
<evidence type="ECO:0000255" key="5"/>
<evidence type="ECO:0000269" key="6">
    <source>
    </source>
</evidence>
<evidence type="ECO:0000305" key="7"/>
<evidence type="ECO:0000312" key="8">
    <source>
        <dbReference type="MGI" id="MGI:1916776"/>
    </source>
</evidence>
<sequence length="535" mass="60974">MAKKVVVIGAGVSGLISLKCCVDEGLEPTCFERTEDIGGLWRFKENVEDGRASIYRSVITNTSKEMSCFSDFPMPEDFPNFLHNSKLLEYFRIFAKKFDLLKYIQFQTTVISVKKRPDFASSGQWEVYTQSNGKEQRTVFDAVMVCSGHHIQPHLPLKSFPGIERFRGQYFHSREYKHPVGFEGKRILVVGIGNSAADIASELSKTAAQVFVSTRHGSWVMSRISEDGYPWDMVFHTRFSSMLRNVLPRTVVKWMMEQQMNRWFNHENYGLVPQNKYLMKEPVLNDDLPSRLLYGAIKVKTRVKELTETAVVFEDGTVEEDVDIIVFATGYTFSFSFLEDSLVKVEDNRVSLYKAMFPPHLEKPTLACIGLIQPLGSIFPTVELQARWATRVFKGLCSLPSETTMMADIVERNEKRVNLFGKSQSQILQTNYVDYLDELALEIGAKPDFVSLFFKDPKLAVKLYFGPCNSYQYRLVGPGQWEGARNAILTQKQRILKPLKTRTLQSSDSAPVSFLLKILGLLAVVLAFFFQLQGF</sequence>
<accession>Q8K2I3</accession>
<accession>Q9QZF7</accession>
<organism>
    <name type="scientific">Mus musculus</name>
    <name type="common">Mouse</name>
    <dbReference type="NCBI Taxonomy" id="10090"/>
    <lineage>
        <taxon>Eukaryota</taxon>
        <taxon>Metazoa</taxon>
        <taxon>Chordata</taxon>
        <taxon>Craniata</taxon>
        <taxon>Vertebrata</taxon>
        <taxon>Euteleostomi</taxon>
        <taxon>Mammalia</taxon>
        <taxon>Eutheria</taxon>
        <taxon>Euarchontoglires</taxon>
        <taxon>Glires</taxon>
        <taxon>Rodentia</taxon>
        <taxon>Myomorpha</taxon>
        <taxon>Muroidea</taxon>
        <taxon>Muridae</taxon>
        <taxon>Murinae</taxon>
        <taxon>Mus</taxon>
        <taxon>Mus</taxon>
    </lineage>
</organism>
<protein>
    <recommendedName>
        <fullName evidence="7">Dimethylaniline monooxygenase [N-oxide-forming] 2</fullName>
        <ecNumber evidence="6">1.14.13.-</ecNumber>
    </recommendedName>
    <alternativeName>
        <fullName>Dimethylaniline oxidase 2</fullName>
    </alternativeName>
    <alternativeName>
        <fullName>Pulmonary flavin-containing monooxygenase 2</fullName>
        <shortName>FMO 2</shortName>
    </alternativeName>
</protein>
<keyword id="KW-0007">Acetylation</keyword>
<keyword id="KW-0256">Endoplasmic reticulum</keyword>
<keyword id="KW-0274">FAD</keyword>
<keyword id="KW-0285">Flavoprotein</keyword>
<keyword id="KW-1017">Isopeptide bond</keyword>
<keyword id="KW-0460">Magnesium</keyword>
<keyword id="KW-0472">Membrane</keyword>
<keyword id="KW-0492">Microsome</keyword>
<keyword id="KW-0503">Monooxygenase</keyword>
<keyword id="KW-0521">NADP</keyword>
<keyword id="KW-0560">Oxidoreductase</keyword>
<keyword id="KW-1185">Reference proteome</keyword>
<keyword id="KW-0812">Transmembrane</keyword>
<keyword id="KW-1133">Transmembrane helix</keyword>
<keyword id="KW-0832">Ubl conjugation</keyword>
<comment type="function">
    <text evidence="6">Catalyzes the oxidative metabolism of numerous xenobiotics, including mainly therapeutic drugs and insecticides that contain a soft nucleophile, most commonly nitrogen and sulfur and participates to their bioactivation (PubMed:18930751). Catalyzes the S-oxygenation of the prodrug ethionamide (ETA) to the S-oxide (ETASO), the first step in its bioactivation following by the second oxygenation to the sulfinic acid but to a lesser extend (PubMed:18930751).</text>
</comment>
<comment type="cofactor">
    <cofactor evidence="1">
        <name>FAD</name>
        <dbReference type="ChEBI" id="CHEBI:57692"/>
    </cofactor>
</comment>
<comment type="cofactor">
    <cofactor evidence="1">
        <name>Mg(2+)</name>
        <dbReference type="ChEBI" id="CHEBI:18420"/>
    </cofactor>
</comment>
<comment type="biophysicochemical properties">
    <kinetics>
        <KM evidence="6">2131 uM for ethionamide</KM>
    </kinetics>
    <phDependence>
        <text>Optimum pH is 10.5.</text>
    </phDependence>
</comment>
<comment type="subcellular location">
    <subcellularLocation>
        <location evidence="2">Microsome membrane</location>
        <topology evidence="2">Single-pass membrane protein</topology>
    </subcellularLocation>
    <subcellularLocation>
        <location evidence="2">Endoplasmic reticulum membrane</location>
        <topology evidence="2">Single-pass membrane protein</topology>
    </subcellularLocation>
</comment>
<comment type="similarity">
    <text evidence="7">Belongs to the FMO family.</text>
</comment>
<feature type="initiator methionine" description="Removed" evidence="2">
    <location>
        <position position="1"/>
    </location>
</feature>
<feature type="chain" id="PRO_0000147648" description="Dimethylaniline monooxygenase [N-oxide-forming] 2">
    <location>
        <begin position="2"/>
        <end position="535"/>
    </location>
</feature>
<feature type="transmembrane region" description="Helical" evidence="5">
    <location>
        <begin position="510"/>
        <end position="530"/>
    </location>
</feature>
<feature type="binding site" evidence="4">
    <location>
        <begin position="9"/>
        <end position="13"/>
    </location>
    <ligand>
        <name>FAD</name>
        <dbReference type="ChEBI" id="CHEBI:57692"/>
    </ligand>
</feature>
<feature type="binding site" evidence="4">
    <location>
        <position position="32"/>
    </location>
    <ligand>
        <name>FAD</name>
        <dbReference type="ChEBI" id="CHEBI:57692"/>
    </ligand>
</feature>
<feature type="binding site" evidence="4">
    <location>
        <begin position="40"/>
        <end position="41"/>
    </location>
    <ligand>
        <name>FAD</name>
        <dbReference type="ChEBI" id="CHEBI:57692"/>
    </ligand>
</feature>
<feature type="binding site" evidence="4">
    <location>
        <begin position="60"/>
        <end position="61"/>
    </location>
    <ligand>
        <name>NADP(+)</name>
        <dbReference type="ChEBI" id="CHEBI:58349"/>
    </ligand>
</feature>
<feature type="binding site" evidence="4">
    <location>
        <begin position="61"/>
        <end position="62"/>
    </location>
    <ligand>
        <name>FAD</name>
        <dbReference type="ChEBI" id="CHEBI:57692"/>
    </ligand>
</feature>
<feature type="binding site" evidence="4">
    <location>
        <begin position="195"/>
        <end position="198"/>
    </location>
    <ligand>
        <name>NADP(+)</name>
        <dbReference type="ChEBI" id="CHEBI:58349"/>
    </ligand>
</feature>
<feature type="modified residue" description="N-acetylalanine" evidence="2">
    <location>
        <position position="2"/>
    </location>
</feature>
<feature type="cross-link" description="Glycyl lysine isopeptide (Lys-Gly) (interchain with G-Cter in SUMO)" evidence="3">
    <location>
        <position position="492"/>
    </location>
</feature>
<feature type="sequence conflict" description="In Ref. 1; AAD56413." evidence="7" ref="1">
    <original>Q</original>
    <variation>R</variation>
    <location>
        <position position="169"/>
    </location>
</feature>
<gene>
    <name evidence="8" type="primary">Fmo2</name>
</gene>
<name>FMO2_MOUSE</name>
<dbReference type="EC" id="1.14.13.-" evidence="6"/>
<dbReference type="EMBL" id="AF184981">
    <property type="protein sequence ID" value="AAD56413.1"/>
    <property type="molecule type" value="mRNA"/>
</dbReference>
<dbReference type="EMBL" id="BC031415">
    <property type="protein sequence ID" value="AAH31415.1"/>
    <property type="molecule type" value="mRNA"/>
</dbReference>
<dbReference type="CCDS" id="CCDS15425.1"/>
<dbReference type="RefSeq" id="NP_001347842.1">
    <property type="nucleotide sequence ID" value="NM_001360913.1"/>
</dbReference>
<dbReference type="RefSeq" id="NP_001347843.1">
    <property type="nucleotide sequence ID" value="NM_001360914.1"/>
</dbReference>
<dbReference type="RefSeq" id="NP_061369.2">
    <property type="nucleotide sequence ID" value="NM_018881.3"/>
</dbReference>
<dbReference type="RefSeq" id="XP_006497012.1">
    <property type="nucleotide sequence ID" value="XM_006496949.3"/>
</dbReference>
<dbReference type="SMR" id="Q8K2I3"/>
<dbReference type="BioGRID" id="207761">
    <property type="interactions" value="5"/>
</dbReference>
<dbReference type="FunCoup" id="Q8K2I3">
    <property type="interactions" value="183"/>
</dbReference>
<dbReference type="STRING" id="10090.ENSMUSP00000044405"/>
<dbReference type="GlyGen" id="Q8K2I3">
    <property type="glycosylation" value="1 site, 1 O-linked glycan (1 site)"/>
</dbReference>
<dbReference type="iPTMnet" id="Q8K2I3"/>
<dbReference type="PhosphoSitePlus" id="Q8K2I3"/>
<dbReference type="jPOST" id="Q8K2I3"/>
<dbReference type="PaxDb" id="10090-ENSMUSP00000044405"/>
<dbReference type="PeptideAtlas" id="Q8K2I3"/>
<dbReference type="ProteomicsDB" id="267373"/>
<dbReference type="Antibodypedia" id="34377">
    <property type="antibodies" value="142 antibodies from 25 providers"/>
</dbReference>
<dbReference type="DNASU" id="55990"/>
<dbReference type="Ensembl" id="ENSMUST00000045902.13">
    <property type="protein sequence ID" value="ENSMUSP00000044405.7"/>
    <property type="gene ID" value="ENSMUSG00000040170.14"/>
</dbReference>
<dbReference type="Ensembl" id="ENSMUST00000111510.8">
    <property type="protein sequence ID" value="ENSMUSP00000107135.2"/>
    <property type="gene ID" value="ENSMUSG00000040170.14"/>
</dbReference>
<dbReference type="GeneID" id="55990"/>
<dbReference type="KEGG" id="mmu:55990"/>
<dbReference type="UCSC" id="uc007dgz.1">
    <property type="organism name" value="mouse"/>
</dbReference>
<dbReference type="AGR" id="MGI:1916776"/>
<dbReference type="CTD" id="2327"/>
<dbReference type="MGI" id="MGI:1916776">
    <property type="gene designation" value="Fmo2"/>
</dbReference>
<dbReference type="VEuPathDB" id="HostDB:ENSMUSG00000040170"/>
<dbReference type="eggNOG" id="KOG1399">
    <property type="taxonomic scope" value="Eukaryota"/>
</dbReference>
<dbReference type="GeneTree" id="ENSGT00940000161099"/>
<dbReference type="HOGENOM" id="CLU_006909_8_2_1"/>
<dbReference type="InParanoid" id="Q8K2I3"/>
<dbReference type="OMA" id="CTGHHFL"/>
<dbReference type="OrthoDB" id="66881at2759"/>
<dbReference type="PhylomeDB" id="Q8K2I3"/>
<dbReference type="TreeFam" id="TF105285"/>
<dbReference type="BRENDA" id="1.14.13.8">
    <property type="organism ID" value="3474"/>
</dbReference>
<dbReference type="Reactome" id="R-MMU-217271">
    <property type="pathway name" value="FMO oxidises nucleophiles"/>
</dbReference>
<dbReference type="BioGRID-ORCS" id="55990">
    <property type="hits" value="1 hit in 78 CRISPR screens"/>
</dbReference>
<dbReference type="ChiTaRS" id="Fmo2">
    <property type="organism name" value="mouse"/>
</dbReference>
<dbReference type="PRO" id="PR:Q8K2I3"/>
<dbReference type="Proteomes" id="UP000000589">
    <property type="component" value="Chromosome 1"/>
</dbReference>
<dbReference type="RNAct" id="Q8K2I3">
    <property type="molecule type" value="protein"/>
</dbReference>
<dbReference type="Bgee" id="ENSMUSG00000040170">
    <property type="expression patterns" value="Expressed in lumbar dorsal root ganglion and 184 other cell types or tissues"/>
</dbReference>
<dbReference type="ExpressionAtlas" id="Q8K2I3">
    <property type="expression patterns" value="baseline and differential"/>
</dbReference>
<dbReference type="GO" id="GO:0005789">
    <property type="term" value="C:endoplasmic reticulum membrane"/>
    <property type="evidence" value="ECO:0007669"/>
    <property type="project" value="UniProtKB-SubCell"/>
</dbReference>
<dbReference type="GO" id="GO:0016020">
    <property type="term" value="C:membrane"/>
    <property type="evidence" value="ECO:0000250"/>
    <property type="project" value="UniProtKB"/>
</dbReference>
<dbReference type="GO" id="GO:0050660">
    <property type="term" value="F:flavin adenine dinucleotide binding"/>
    <property type="evidence" value="ECO:0007669"/>
    <property type="project" value="InterPro"/>
</dbReference>
<dbReference type="GO" id="GO:0004497">
    <property type="term" value="F:monooxygenase activity"/>
    <property type="evidence" value="ECO:0000314"/>
    <property type="project" value="MGI"/>
</dbReference>
<dbReference type="GO" id="GO:0004499">
    <property type="term" value="F:N,N-dimethylaniline monooxygenase activity"/>
    <property type="evidence" value="ECO:0007669"/>
    <property type="project" value="Ensembl"/>
</dbReference>
<dbReference type="GO" id="GO:0050661">
    <property type="term" value="F:NADP binding"/>
    <property type="evidence" value="ECO:0007669"/>
    <property type="project" value="InterPro"/>
</dbReference>
<dbReference type="GO" id="GO:0097009">
    <property type="term" value="P:energy homeostasis"/>
    <property type="evidence" value="ECO:0000316"/>
    <property type="project" value="MGI"/>
</dbReference>
<dbReference type="GO" id="GO:0006739">
    <property type="term" value="P:NADP metabolic process"/>
    <property type="evidence" value="ECO:0007669"/>
    <property type="project" value="Ensembl"/>
</dbReference>
<dbReference type="GO" id="GO:0046322">
    <property type="term" value="P:negative regulation of fatty acid oxidation"/>
    <property type="evidence" value="ECO:0000316"/>
    <property type="project" value="MGI"/>
</dbReference>
<dbReference type="GO" id="GO:0006082">
    <property type="term" value="P:organic acid metabolic process"/>
    <property type="evidence" value="ECO:0007669"/>
    <property type="project" value="Ensembl"/>
</dbReference>
<dbReference type="GO" id="GO:0072592">
    <property type="term" value="P:oxygen metabolic process"/>
    <property type="evidence" value="ECO:0000314"/>
    <property type="project" value="MGI"/>
</dbReference>
<dbReference type="GO" id="GO:0009404">
    <property type="term" value="P:toxin metabolic process"/>
    <property type="evidence" value="ECO:0007669"/>
    <property type="project" value="Ensembl"/>
</dbReference>
<dbReference type="GO" id="GO:0006805">
    <property type="term" value="P:xenobiotic metabolic process"/>
    <property type="evidence" value="ECO:0007669"/>
    <property type="project" value="Ensembl"/>
</dbReference>
<dbReference type="FunFam" id="3.50.50.60:FF:000042">
    <property type="entry name" value="Dimethylaniline monooxygenase [N-oxide-forming]"/>
    <property type="match status" value="1"/>
</dbReference>
<dbReference type="FunFam" id="3.50.50.60:FF:000073">
    <property type="entry name" value="Dimethylaniline monooxygenase [N-oxide-forming]"/>
    <property type="match status" value="1"/>
</dbReference>
<dbReference type="FunFam" id="3.50.50.60:FF:000409">
    <property type="entry name" value="Dimethylaniline monooxygenase [N-oxide-forming]"/>
    <property type="match status" value="1"/>
</dbReference>
<dbReference type="Gene3D" id="3.50.50.60">
    <property type="entry name" value="FAD/NAD(P)-binding domain"/>
    <property type="match status" value="2"/>
</dbReference>
<dbReference type="InterPro" id="IPR036188">
    <property type="entry name" value="FAD/NAD-bd_sf"/>
</dbReference>
<dbReference type="InterPro" id="IPR000960">
    <property type="entry name" value="Flavin_mOase"/>
</dbReference>
<dbReference type="InterPro" id="IPR020946">
    <property type="entry name" value="Flavin_mOase-like"/>
</dbReference>
<dbReference type="InterPro" id="IPR002254">
    <property type="entry name" value="Flavin_mOase_2"/>
</dbReference>
<dbReference type="InterPro" id="IPR050346">
    <property type="entry name" value="FMO-like"/>
</dbReference>
<dbReference type="PANTHER" id="PTHR23023">
    <property type="entry name" value="DIMETHYLANILINE MONOOXYGENASE"/>
    <property type="match status" value="1"/>
</dbReference>
<dbReference type="Pfam" id="PF00743">
    <property type="entry name" value="FMO-like"/>
    <property type="match status" value="1"/>
</dbReference>
<dbReference type="PIRSF" id="PIRSF000332">
    <property type="entry name" value="FMO"/>
    <property type="match status" value="1"/>
</dbReference>
<dbReference type="PRINTS" id="PR00370">
    <property type="entry name" value="FMOXYGENASE"/>
</dbReference>
<dbReference type="PRINTS" id="PR01122">
    <property type="entry name" value="FMOXYGENASE2"/>
</dbReference>
<dbReference type="SUPFAM" id="SSF51905">
    <property type="entry name" value="FAD/NAD(P)-binding domain"/>
    <property type="match status" value="2"/>
</dbReference>
<reference key="1">
    <citation type="journal article" date="2001" name="J. Biochem. Mol. Toxicol.">
        <title>Sequencing, expression, and characterization of cDNA expressed flavin-containing monooxygenase 2 from mouse.</title>
        <authorList>
            <person name="Karoly E.D."/>
            <person name="Rose R.L."/>
        </authorList>
    </citation>
    <scope>NUCLEOTIDE SEQUENCE [MRNA]</scope>
    <scope>CHARACTERIZATION</scope>
    <source>
        <strain>C57BL/6J</strain>
        <tissue>Kidney</tissue>
    </source>
</reference>
<reference key="2">
    <citation type="journal article" date="2004" name="Genome Res.">
        <title>The status, quality, and expansion of the NIH full-length cDNA project: the Mammalian Gene Collection (MGC).</title>
        <authorList>
            <consortium name="The MGC Project Team"/>
        </authorList>
    </citation>
    <scope>NUCLEOTIDE SEQUENCE [LARGE SCALE MRNA]</scope>
    <source>
        <strain>Czech II</strain>
        <tissue>Mammary tumor</tissue>
    </source>
</reference>
<reference key="3">
    <citation type="journal article" date="2008" name="Toxicol. Appl. Pharmacol.">
        <title>Metabolism of the anti-tuberculosis drug ethionamide by mouse and human FMO1, FMO2 and FMO3 and mouse and human lung microsomes.</title>
        <authorList>
            <person name="Henderson M.C."/>
            <person name="Siddens L.K."/>
            <person name="Morre J.T."/>
            <person name="Krueger S.K."/>
            <person name="Williams D.E."/>
        </authorList>
    </citation>
    <scope>FUNCTION</scope>
    <scope>BIOPHYSICOCHEMICAL PROPERTIES</scope>
</reference>
<reference key="4">
    <citation type="journal article" date="2010" name="Cell">
        <title>A tissue-specific atlas of mouse protein phosphorylation and expression.</title>
        <authorList>
            <person name="Huttlin E.L."/>
            <person name="Jedrychowski M.P."/>
            <person name="Elias J.E."/>
            <person name="Goswami T."/>
            <person name="Rad R."/>
            <person name="Beausoleil S.A."/>
            <person name="Villen J."/>
            <person name="Haas W."/>
            <person name="Sowa M.E."/>
            <person name="Gygi S.P."/>
        </authorList>
    </citation>
    <scope>IDENTIFICATION BY MASS SPECTROMETRY [LARGE SCALE ANALYSIS]</scope>
    <source>
        <tissue>Heart</tissue>
        <tissue>Kidney</tissue>
        <tissue>Lung</tissue>
        <tissue>Pancreas</tissue>
    </source>
</reference>